<organism>
    <name type="scientific">Arabidopsis thaliana</name>
    <name type="common">Mouse-ear cress</name>
    <dbReference type="NCBI Taxonomy" id="3702"/>
    <lineage>
        <taxon>Eukaryota</taxon>
        <taxon>Viridiplantae</taxon>
        <taxon>Streptophyta</taxon>
        <taxon>Embryophyta</taxon>
        <taxon>Tracheophyta</taxon>
        <taxon>Spermatophyta</taxon>
        <taxon>Magnoliopsida</taxon>
        <taxon>eudicotyledons</taxon>
        <taxon>Gunneridae</taxon>
        <taxon>Pentapetalae</taxon>
        <taxon>rosids</taxon>
        <taxon>malvids</taxon>
        <taxon>Brassicales</taxon>
        <taxon>Brassicaceae</taxon>
        <taxon>Camelineae</taxon>
        <taxon>Arabidopsis</taxon>
    </lineage>
</organism>
<gene>
    <name evidence="8" type="primary">KIPK1</name>
    <name evidence="7" type="synonym">KIPK</name>
    <name evidence="11" type="ordered locus">At3g52890</name>
    <name evidence="12" type="ORF">F8J2_60</name>
</gene>
<proteinExistence type="evidence at protein level"/>
<sequence length="934" mass="102694">MGSFAGACEIVEEKDDEVRLPKHSGRYGKSVMGSSSKDLVERKQREYHGSLEYDIDMLFQSISVKPSTTRLMSSSFHHHETSASAGPSRTTSPSKRIASMKKPGTPQSPRFVGLSDSVSLKQALRDRCISKASEMAAQKRLSKSAAASPRVSEADRIKSLYNQVSNESTSSRSGLVPVDKGKGSLVEIPLMPVNDKPSSSKSVPQRFEDPSNPISEPSQAGTSFGLQGVGNQTREIKLLHRSNKPGSCLSSGSGDYEIELDENVASPSTHAFVEDDVIEIDKHVTSLPSHSSKKVNATELDKNISSSAVDSEQKGKLDDAPNSGTENGKTVRKVTRMIPRPKQPKKKILLKKKLKIGVVSATYPTKDDEEIVPSLDSSANQLLCQRCHCSLKSTSIDDNPPSYTSSHNPKICTDSLSSVSNKEAHQGSDENSSGSCNVSQSSEADIVIMKQDVSSSNNSGIGAMVEKETENPTSSEKFEFSLSSKDSLGDYSRSTSISEESNLSRFSCGNKPHMSMDVRWEAIKHIKVQYGSLGLRHFNLLKKLGCGDIGTVYLAELIGTNCLFAIKVMDNEFLARRKKSPRAQAEREILKMLDHPFLPTLYAQFTSDNLSCLVMEYCPGGDLHVLRQKQLGRCFPEPAARFYVAEILLALEYLHMLGIIYRDLKPENILVREDGHIMLTDFDLSLRCAVNPTLVRSNSPPGKDPARISGPYNTSNCIQPFCITEPSCQVSCFSPRLSSNQQQGRKPKRGDHLSKTQQHLSRSLPQLVAEPTEARSNSFVGTHEYLAPEIIKGEGHGAAVDWWTFGVLLYELLYGKTPFKGYNNDETLANVVLQNLKFPDSPLVSFQAKDLIRGLLVKEPENRLGSEKGSVEIKRHPFFEGLNWALIRCAIPPELPDFYEYGGGPEAAADSPGGSNNRYLECKAIGDHLEFELF</sequence>
<protein>
    <recommendedName>
        <fullName evidence="9">Serine/threonine-protein kinase KIPK1</fullName>
        <ecNumber evidence="1">2.7.11.1</ecNumber>
    </recommendedName>
    <alternativeName>
        <fullName evidence="7">KCBP-interacting protein kinase</fullName>
    </alternativeName>
</protein>
<name>KIPK1_ARATH</name>
<evidence type="ECO:0000255" key="1">
    <source>
        <dbReference type="PROSITE-ProRule" id="PRU00159"/>
    </source>
</evidence>
<evidence type="ECO:0000255" key="2">
    <source>
        <dbReference type="PROSITE-ProRule" id="PRU10027"/>
    </source>
</evidence>
<evidence type="ECO:0000256" key="3">
    <source>
        <dbReference type="SAM" id="MobiDB-lite"/>
    </source>
</evidence>
<evidence type="ECO:0000269" key="4">
    <source>
    </source>
</evidence>
<evidence type="ECO:0000269" key="5">
    <source>
    </source>
</evidence>
<evidence type="ECO:0000269" key="6">
    <source>
    </source>
</evidence>
<evidence type="ECO:0000303" key="7">
    <source>
    </source>
</evidence>
<evidence type="ECO:0000303" key="8">
    <source>
    </source>
</evidence>
<evidence type="ECO:0000305" key="9"/>
<evidence type="ECO:0000305" key="10">
    <source>
    </source>
</evidence>
<evidence type="ECO:0000312" key="11">
    <source>
        <dbReference type="Araport" id="AT3G52890"/>
    </source>
</evidence>
<evidence type="ECO:0000312" key="12">
    <source>
        <dbReference type="EMBL" id="CAB86893.1"/>
    </source>
</evidence>
<dbReference type="EC" id="2.7.11.1" evidence="1"/>
<dbReference type="EMBL" id="AL132969">
    <property type="protein sequence ID" value="CAB86893.1"/>
    <property type="molecule type" value="Genomic_DNA"/>
</dbReference>
<dbReference type="EMBL" id="CP002686">
    <property type="protein sequence ID" value="AEE79005.1"/>
    <property type="molecule type" value="Genomic_DNA"/>
</dbReference>
<dbReference type="EMBL" id="CP002686">
    <property type="protein sequence ID" value="AEE79006.1"/>
    <property type="molecule type" value="Genomic_DNA"/>
</dbReference>
<dbReference type="EMBL" id="CP002686">
    <property type="protein sequence ID" value="ANM65700.1"/>
    <property type="molecule type" value="Genomic_DNA"/>
</dbReference>
<dbReference type="EMBL" id="CP002686">
    <property type="protein sequence ID" value="ANM65701.1"/>
    <property type="molecule type" value="Genomic_DNA"/>
</dbReference>
<dbReference type="EMBL" id="AY124003">
    <property type="protein sequence ID" value="AAM74511.1"/>
    <property type="molecule type" value="mRNA"/>
</dbReference>
<dbReference type="EMBL" id="BT001910">
    <property type="protein sequence ID" value="AAN71909.1"/>
    <property type="molecule type" value="mRNA"/>
</dbReference>
<dbReference type="EMBL" id="BT002286">
    <property type="protein sequence ID" value="AAN72297.1"/>
    <property type="molecule type" value="mRNA"/>
</dbReference>
<dbReference type="EMBL" id="AF236104">
    <property type="protein sequence ID" value="AAF68383.1"/>
    <property type="status" value="ALT_INIT"/>
    <property type="molecule type" value="mRNA"/>
</dbReference>
<dbReference type="PIR" id="T47546">
    <property type="entry name" value="T47546"/>
</dbReference>
<dbReference type="RefSeq" id="NP_001319733.1">
    <property type="nucleotide sequence ID" value="NM_001339591.1"/>
</dbReference>
<dbReference type="RefSeq" id="NP_001327649.1">
    <property type="nucleotide sequence ID" value="NM_001339592.1"/>
</dbReference>
<dbReference type="RefSeq" id="NP_566973.2">
    <property type="nucleotide sequence ID" value="NM_115149.3"/>
</dbReference>
<dbReference type="RefSeq" id="NP_850687.1">
    <property type="nucleotide sequence ID" value="NM_180356.2"/>
</dbReference>
<dbReference type="SMR" id="Q9LFA2"/>
<dbReference type="BioGRID" id="9772">
    <property type="interactions" value="7"/>
</dbReference>
<dbReference type="FunCoup" id="Q9LFA2">
    <property type="interactions" value="666"/>
</dbReference>
<dbReference type="IntAct" id="Q9LFA2">
    <property type="interactions" value="7"/>
</dbReference>
<dbReference type="STRING" id="3702.Q9LFA2"/>
<dbReference type="iPTMnet" id="Q9LFA2"/>
<dbReference type="PaxDb" id="3702-AT3G52890.1"/>
<dbReference type="ProteomicsDB" id="250692"/>
<dbReference type="EnsemblPlants" id="AT3G52890.1">
    <property type="protein sequence ID" value="AT3G52890.1"/>
    <property type="gene ID" value="AT3G52890"/>
</dbReference>
<dbReference type="EnsemblPlants" id="AT3G52890.2">
    <property type="protein sequence ID" value="AT3G52890.2"/>
    <property type="gene ID" value="AT3G52890"/>
</dbReference>
<dbReference type="EnsemblPlants" id="AT3G52890.3">
    <property type="protein sequence ID" value="AT3G52890.3"/>
    <property type="gene ID" value="AT3G52890"/>
</dbReference>
<dbReference type="EnsemblPlants" id="AT3G52890.4">
    <property type="protein sequence ID" value="AT3G52890.4"/>
    <property type="gene ID" value="AT3G52890"/>
</dbReference>
<dbReference type="GeneID" id="824455"/>
<dbReference type="Gramene" id="AT3G52890.1">
    <property type="protein sequence ID" value="AT3G52890.1"/>
    <property type="gene ID" value="AT3G52890"/>
</dbReference>
<dbReference type="Gramene" id="AT3G52890.2">
    <property type="protein sequence ID" value="AT3G52890.2"/>
    <property type="gene ID" value="AT3G52890"/>
</dbReference>
<dbReference type="Gramene" id="AT3G52890.3">
    <property type="protein sequence ID" value="AT3G52890.3"/>
    <property type="gene ID" value="AT3G52890"/>
</dbReference>
<dbReference type="Gramene" id="AT3G52890.4">
    <property type="protein sequence ID" value="AT3G52890.4"/>
    <property type="gene ID" value="AT3G52890"/>
</dbReference>
<dbReference type="KEGG" id="ath:AT3G52890"/>
<dbReference type="Araport" id="AT3G52890"/>
<dbReference type="TAIR" id="AT3G52890">
    <property type="gene designation" value="KIPK"/>
</dbReference>
<dbReference type="eggNOG" id="KOG0610">
    <property type="taxonomic scope" value="Eukaryota"/>
</dbReference>
<dbReference type="HOGENOM" id="CLU_000288_39_0_1"/>
<dbReference type="InParanoid" id="Q9LFA2"/>
<dbReference type="OMA" id="SHNPEIC"/>
<dbReference type="PhylomeDB" id="Q9LFA2"/>
<dbReference type="PRO" id="PR:Q9LFA2"/>
<dbReference type="Proteomes" id="UP000006548">
    <property type="component" value="Chromosome 3"/>
</dbReference>
<dbReference type="ExpressionAtlas" id="Q9LFA2">
    <property type="expression patterns" value="baseline and differential"/>
</dbReference>
<dbReference type="GO" id="GO:0005737">
    <property type="term" value="C:cytoplasm"/>
    <property type="evidence" value="ECO:0000314"/>
    <property type="project" value="UniProtKB"/>
</dbReference>
<dbReference type="GO" id="GO:0005634">
    <property type="term" value="C:nucleus"/>
    <property type="evidence" value="ECO:0000314"/>
    <property type="project" value="UniProtKB"/>
</dbReference>
<dbReference type="GO" id="GO:0005524">
    <property type="term" value="F:ATP binding"/>
    <property type="evidence" value="ECO:0007669"/>
    <property type="project" value="UniProtKB-KW"/>
</dbReference>
<dbReference type="GO" id="GO:0016301">
    <property type="term" value="F:kinase activity"/>
    <property type="evidence" value="ECO:0000250"/>
    <property type="project" value="TAIR"/>
</dbReference>
<dbReference type="GO" id="GO:0004672">
    <property type="term" value="F:protein kinase activity"/>
    <property type="evidence" value="ECO:0000314"/>
    <property type="project" value="TAIR"/>
</dbReference>
<dbReference type="GO" id="GO:0019901">
    <property type="term" value="F:protein kinase binding"/>
    <property type="evidence" value="ECO:0000353"/>
    <property type="project" value="UniProtKB"/>
</dbReference>
<dbReference type="GO" id="GO:0106310">
    <property type="term" value="F:protein serine kinase activity"/>
    <property type="evidence" value="ECO:0007669"/>
    <property type="project" value="RHEA"/>
</dbReference>
<dbReference type="GO" id="GO:0004674">
    <property type="term" value="F:protein serine/threonine kinase activity"/>
    <property type="evidence" value="ECO:0007669"/>
    <property type="project" value="UniProtKB-KW"/>
</dbReference>
<dbReference type="CDD" id="cd05574">
    <property type="entry name" value="STKc_phototropin_like"/>
    <property type="match status" value="1"/>
</dbReference>
<dbReference type="FunFam" id="3.30.200.20:FF:000032">
    <property type="entry name" value="Serine/threonine-protein kinase D6PK-like"/>
    <property type="match status" value="1"/>
</dbReference>
<dbReference type="FunFam" id="1.10.510.10:FF:000020">
    <property type="entry name" value="serine/threonine-protein kinase D6PK-like"/>
    <property type="match status" value="1"/>
</dbReference>
<dbReference type="FunFam" id="1.10.510.10:FF:000028">
    <property type="entry name" value="serine/threonine-protein kinase D6PK-like"/>
    <property type="match status" value="1"/>
</dbReference>
<dbReference type="Gene3D" id="3.30.200.20">
    <property type="entry name" value="Phosphorylase Kinase, domain 1"/>
    <property type="match status" value="1"/>
</dbReference>
<dbReference type="Gene3D" id="1.10.510.10">
    <property type="entry name" value="Transferase(Phosphotransferase) domain 1"/>
    <property type="match status" value="2"/>
</dbReference>
<dbReference type="InterPro" id="IPR011009">
    <property type="entry name" value="Kinase-like_dom_sf"/>
</dbReference>
<dbReference type="InterPro" id="IPR000719">
    <property type="entry name" value="Prot_kinase_dom"/>
</dbReference>
<dbReference type="InterPro" id="IPR008271">
    <property type="entry name" value="Ser/Thr_kinase_AS"/>
</dbReference>
<dbReference type="PANTHER" id="PTHR45637">
    <property type="entry name" value="FLIPPASE KINASE 1-RELATED"/>
    <property type="match status" value="1"/>
</dbReference>
<dbReference type="Pfam" id="PF00069">
    <property type="entry name" value="Pkinase"/>
    <property type="match status" value="2"/>
</dbReference>
<dbReference type="SMART" id="SM00220">
    <property type="entry name" value="S_TKc"/>
    <property type="match status" value="1"/>
</dbReference>
<dbReference type="SUPFAM" id="SSF56112">
    <property type="entry name" value="Protein kinase-like (PK-like)"/>
    <property type="match status" value="1"/>
</dbReference>
<dbReference type="PROSITE" id="PS50011">
    <property type="entry name" value="PROTEIN_KINASE_DOM"/>
    <property type="match status" value="1"/>
</dbReference>
<dbReference type="PROSITE" id="PS00108">
    <property type="entry name" value="PROTEIN_KINASE_ST"/>
    <property type="match status" value="1"/>
</dbReference>
<feature type="chain" id="PRO_0000403275" description="Serine/threonine-protein kinase KIPK1">
    <location>
        <begin position="1"/>
        <end position="934"/>
    </location>
</feature>
<feature type="domain" description="Protein kinase" evidence="1">
    <location>
        <begin position="538"/>
        <end position="879"/>
    </location>
</feature>
<feature type="region of interest" description="Disordered" evidence="3">
    <location>
        <begin position="20"/>
        <end position="40"/>
    </location>
</feature>
<feature type="region of interest" description="Disordered" evidence="3">
    <location>
        <begin position="70"/>
        <end position="113"/>
    </location>
</feature>
<feature type="region of interest" description="Disordered" evidence="3">
    <location>
        <begin position="189"/>
        <end position="227"/>
    </location>
</feature>
<feature type="region of interest" description="Disordered" evidence="3">
    <location>
        <begin position="305"/>
        <end position="343"/>
    </location>
</feature>
<feature type="region of interest" description="Disordered" evidence="3">
    <location>
        <begin position="395"/>
        <end position="438"/>
    </location>
</feature>
<feature type="region of interest" description="Disordered" evidence="3">
    <location>
        <begin position="466"/>
        <end position="493"/>
    </location>
</feature>
<feature type="region of interest" description="Disordered" evidence="3">
    <location>
        <begin position="738"/>
        <end position="773"/>
    </location>
</feature>
<feature type="compositionally biased region" description="Polar residues" evidence="3">
    <location>
        <begin position="82"/>
        <end position="94"/>
    </location>
</feature>
<feature type="compositionally biased region" description="Polar residues" evidence="3">
    <location>
        <begin position="212"/>
        <end position="227"/>
    </location>
</feature>
<feature type="compositionally biased region" description="Polar residues" evidence="3">
    <location>
        <begin position="395"/>
        <end position="421"/>
    </location>
</feature>
<feature type="compositionally biased region" description="Polar residues" evidence="3">
    <location>
        <begin position="755"/>
        <end position="764"/>
    </location>
</feature>
<feature type="active site" description="Proton acceptor" evidence="1 2">
    <location>
        <position position="663"/>
    </location>
</feature>
<feature type="binding site" evidence="1">
    <location>
        <begin position="544"/>
        <end position="552"/>
    </location>
    <ligand>
        <name>ATP</name>
        <dbReference type="ChEBI" id="CHEBI:30616"/>
    </ligand>
</feature>
<feature type="binding site" evidence="1">
    <location>
        <position position="567"/>
    </location>
    <ligand>
        <name>ATP</name>
        <dbReference type="ChEBI" id="CHEBI:30616"/>
    </ligand>
</feature>
<reference key="1">
    <citation type="journal article" date="2000" name="Nature">
        <title>Sequence and analysis of chromosome 3 of the plant Arabidopsis thaliana.</title>
        <authorList>
            <person name="Salanoubat M."/>
            <person name="Lemcke K."/>
            <person name="Rieger M."/>
            <person name="Ansorge W."/>
            <person name="Unseld M."/>
            <person name="Fartmann B."/>
            <person name="Valle G."/>
            <person name="Bloecker H."/>
            <person name="Perez-Alonso M."/>
            <person name="Obermaier B."/>
            <person name="Delseny M."/>
            <person name="Boutry M."/>
            <person name="Grivell L.A."/>
            <person name="Mache R."/>
            <person name="Puigdomenech P."/>
            <person name="De Simone V."/>
            <person name="Choisne N."/>
            <person name="Artiguenave F."/>
            <person name="Robert C."/>
            <person name="Brottier P."/>
            <person name="Wincker P."/>
            <person name="Cattolico L."/>
            <person name="Weissenbach J."/>
            <person name="Saurin W."/>
            <person name="Quetier F."/>
            <person name="Schaefer M."/>
            <person name="Mueller-Auer S."/>
            <person name="Gabel C."/>
            <person name="Fuchs M."/>
            <person name="Benes V."/>
            <person name="Wurmbach E."/>
            <person name="Drzonek H."/>
            <person name="Erfle H."/>
            <person name="Jordan N."/>
            <person name="Bangert S."/>
            <person name="Wiedelmann R."/>
            <person name="Kranz H."/>
            <person name="Voss H."/>
            <person name="Holland R."/>
            <person name="Brandt P."/>
            <person name="Nyakatura G."/>
            <person name="Vezzi A."/>
            <person name="D'Angelo M."/>
            <person name="Pallavicini A."/>
            <person name="Toppo S."/>
            <person name="Simionati B."/>
            <person name="Conrad A."/>
            <person name="Hornischer K."/>
            <person name="Kauer G."/>
            <person name="Loehnert T.-H."/>
            <person name="Nordsiek G."/>
            <person name="Reichelt J."/>
            <person name="Scharfe M."/>
            <person name="Schoen O."/>
            <person name="Bargues M."/>
            <person name="Terol J."/>
            <person name="Climent J."/>
            <person name="Navarro P."/>
            <person name="Collado C."/>
            <person name="Perez-Perez A."/>
            <person name="Ottenwaelder B."/>
            <person name="Duchemin D."/>
            <person name="Cooke R."/>
            <person name="Laudie M."/>
            <person name="Berger-Llauro C."/>
            <person name="Purnelle B."/>
            <person name="Masuy D."/>
            <person name="de Haan M."/>
            <person name="Maarse A.C."/>
            <person name="Alcaraz J.-P."/>
            <person name="Cottet A."/>
            <person name="Casacuberta E."/>
            <person name="Monfort A."/>
            <person name="Argiriou A."/>
            <person name="Flores M."/>
            <person name="Liguori R."/>
            <person name="Vitale D."/>
            <person name="Mannhaupt G."/>
            <person name="Haase D."/>
            <person name="Schoof H."/>
            <person name="Rudd S."/>
            <person name="Zaccaria P."/>
            <person name="Mewes H.-W."/>
            <person name="Mayer K.F.X."/>
            <person name="Kaul S."/>
            <person name="Town C.D."/>
            <person name="Koo H.L."/>
            <person name="Tallon L.J."/>
            <person name="Jenkins J."/>
            <person name="Rooney T."/>
            <person name="Rizzo M."/>
            <person name="Walts A."/>
            <person name="Utterback T."/>
            <person name="Fujii C.Y."/>
            <person name="Shea T.P."/>
            <person name="Creasy T.H."/>
            <person name="Haas B."/>
            <person name="Maiti R."/>
            <person name="Wu D."/>
            <person name="Peterson J."/>
            <person name="Van Aken S."/>
            <person name="Pai G."/>
            <person name="Militscher J."/>
            <person name="Sellers P."/>
            <person name="Gill J.E."/>
            <person name="Feldblyum T.V."/>
            <person name="Preuss D."/>
            <person name="Lin X."/>
            <person name="Nierman W.C."/>
            <person name="Salzberg S.L."/>
            <person name="White O."/>
            <person name="Venter J.C."/>
            <person name="Fraser C.M."/>
            <person name="Kaneko T."/>
            <person name="Nakamura Y."/>
            <person name="Sato S."/>
            <person name="Kato T."/>
            <person name="Asamizu E."/>
            <person name="Sasamoto S."/>
            <person name="Kimura T."/>
            <person name="Idesawa K."/>
            <person name="Kawashima K."/>
            <person name="Kishida Y."/>
            <person name="Kiyokawa C."/>
            <person name="Kohara M."/>
            <person name="Matsumoto M."/>
            <person name="Matsuno A."/>
            <person name="Muraki A."/>
            <person name="Nakayama S."/>
            <person name="Nakazaki N."/>
            <person name="Shinpo S."/>
            <person name="Takeuchi C."/>
            <person name="Wada T."/>
            <person name="Watanabe A."/>
            <person name="Yamada M."/>
            <person name="Yasuda M."/>
            <person name="Tabata S."/>
        </authorList>
    </citation>
    <scope>NUCLEOTIDE SEQUENCE [LARGE SCALE GENOMIC DNA]</scope>
    <source>
        <strain>cv. Columbia</strain>
    </source>
</reference>
<reference key="2">
    <citation type="journal article" date="2017" name="Plant J.">
        <title>Araport11: a complete reannotation of the Arabidopsis thaliana reference genome.</title>
        <authorList>
            <person name="Cheng C.Y."/>
            <person name="Krishnakumar V."/>
            <person name="Chan A.P."/>
            <person name="Thibaud-Nissen F."/>
            <person name="Schobel S."/>
            <person name="Town C.D."/>
        </authorList>
    </citation>
    <scope>GENOME REANNOTATION</scope>
    <source>
        <strain>cv. Columbia</strain>
    </source>
</reference>
<reference key="3">
    <citation type="journal article" date="2003" name="Science">
        <title>Empirical analysis of transcriptional activity in the Arabidopsis genome.</title>
        <authorList>
            <person name="Yamada K."/>
            <person name="Lim J."/>
            <person name="Dale J.M."/>
            <person name="Chen H."/>
            <person name="Shinn P."/>
            <person name="Palm C.J."/>
            <person name="Southwick A.M."/>
            <person name="Wu H.C."/>
            <person name="Kim C.J."/>
            <person name="Nguyen M."/>
            <person name="Pham P.K."/>
            <person name="Cheuk R.F."/>
            <person name="Karlin-Newmann G."/>
            <person name="Liu S.X."/>
            <person name="Lam B."/>
            <person name="Sakano H."/>
            <person name="Wu T."/>
            <person name="Yu G."/>
            <person name="Miranda M."/>
            <person name="Quach H.L."/>
            <person name="Tripp M."/>
            <person name="Chang C.H."/>
            <person name="Lee J.M."/>
            <person name="Toriumi M.J."/>
            <person name="Chan M.M."/>
            <person name="Tang C.C."/>
            <person name="Onodera C.S."/>
            <person name="Deng J.M."/>
            <person name="Akiyama K."/>
            <person name="Ansari Y."/>
            <person name="Arakawa T."/>
            <person name="Banh J."/>
            <person name="Banno F."/>
            <person name="Bowser L."/>
            <person name="Brooks S.Y."/>
            <person name="Carninci P."/>
            <person name="Chao Q."/>
            <person name="Choy N."/>
            <person name="Enju A."/>
            <person name="Goldsmith A.D."/>
            <person name="Gurjal M."/>
            <person name="Hansen N.F."/>
            <person name="Hayashizaki Y."/>
            <person name="Johnson-Hopson C."/>
            <person name="Hsuan V.W."/>
            <person name="Iida K."/>
            <person name="Karnes M."/>
            <person name="Khan S."/>
            <person name="Koesema E."/>
            <person name="Ishida J."/>
            <person name="Jiang P.X."/>
            <person name="Jones T."/>
            <person name="Kawai J."/>
            <person name="Kamiya A."/>
            <person name="Meyers C."/>
            <person name="Nakajima M."/>
            <person name="Narusaka M."/>
            <person name="Seki M."/>
            <person name="Sakurai T."/>
            <person name="Satou M."/>
            <person name="Tamse R."/>
            <person name="Vaysberg M."/>
            <person name="Wallender E.K."/>
            <person name="Wong C."/>
            <person name="Yamamura Y."/>
            <person name="Yuan S."/>
            <person name="Shinozaki K."/>
            <person name="Davis R.W."/>
            <person name="Theologis A."/>
            <person name="Ecker J.R."/>
        </authorList>
    </citation>
    <scope>NUCLEOTIDE SEQUENCE [LARGE SCALE MRNA]</scope>
    <source>
        <strain>cv. Columbia</strain>
    </source>
</reference>
<reference key="4">
    <citation type="journal article" date="2000" name="J. Biol. Chem.">
        <title>Interaction of a kinesin-like calmodulin-binding protein with a protein kinase.</title>
        <authorList>
            <person name="Day I.S."/>
            <person name="Miller C."/>
            <person name="Golovkin M."/>
            <person name="Reddy A.S."/>
        </authorList>
    </citation>
    <scope>NUCLEOTIDE SEQUENCE [MRNA] OF 148-934</scope>
    <scope>TISSUE SPECIFICITY</scope>
    <scope>INTERACTION WITH KCBP</scope>
    <scope>AUTOPHOSPHORYLATION</scope>
</reference>
<reference key="5">
    <citation type="journal article" date="2006" name="J. Biol. Chem.">
        <title>Structural and functional insights into the regulation of Arabidopsis AGC VIIIa kinases.</title>
        <authorList>
            <person name="Zegzouti H."/>
            <person name="Li W."/>
            <person name="Lorenz T.C."/>
            <person name="Xie M."/>
            <person name="Payne C.T."/>
            <person name="Smith K."/>
            <person name="Glenny S."/>
            <person name="Payne G.S."/>
            <person name="Christensen S.K."/>
        </authorList>
    </citation>
    <scope>SUBCELLULAR LOCATION</scope>
    <scope>TISSUE SPECIFICITY</scope>
</reference>
<reference key="6">
    <citation type="journal article" date="2015" name="J. Exp. Bot.">
        <title>PERK-KIPK-KCBP signalling negatively regulates root growth in Arabidopsis thaliana.</title>
        <authorList>
            <person name="Humphrey T.V."/>
            <person name="Haasen K.E."/>
            <person name="Aldea-Brydges M.G."/>
            <person name="Sun H."/>
            <person name="Zayed Y."/>
            <person name="Indriolo E."/>
            <person name="Goring D.R."/>
        </authorList>
    </citation>
    <scope>INTERACTION WITH KCBP; PERK8; PERK9; PERK10 AND PERK13</scope>
    <scope>FUNCTION</scope>
</reference>
<accession>Q9LFA2</accession>
<accession>A0A1I9LSZ2</accession>
<accession>Q9M590</accession>
<comment type="function">
    <text evidence="6">Could be involved in the negative regulation of root growth.</text>
</comment>
<comment type="catalytic activity">
    <reaction>
        <text>L-seryl-[protein] + ATP = O-phospho-L-seryl-[protein] + ADP + H(+)</text>
        <dbReference type="Rhea" id="RHEA:17989"/>
        <dbReference type="Rhea" id="RHEA-COMP:9863"/>
        <dbReference type="Rhea" id="RHEA-COMP:11604"/>
        <dbReference type="ChEBI" id="CHEBI:15378"/>
        <dbReference type="ChEBI" id="CHEBI:29999"/>
        <dbReference type="ChEBI" id="CHEBI:30616"/>
        <dbReference type="ChEBI" id="CHEBI:83421"/>
        <dbReference type="ChEBI" id="CHEBI:456216"/>
        <dbReference type="EC" id="2.7.11.1"/>
    </reaction>
</comment>
<comment type="catalytic activity">
    <reaction>
        <text>L-threonyl-[protein] + ATP = O-phospho-L-threonyl-[protein] + ADP + H(+)</text>
        <dbReference type="Rhea" id="RHEA:46608"/>
        <dbReference type="Rhea" id="RHEA-COMP:11060"/>
        <dbReference type="Rhea" id="RHEA-COMP:11605"/>
        <dbReference type="ChEBI" id="CHEBI:15378"/>
        <dbReference type="ChEBI" id="CHEBI:30013"/>
        <dbReference type="ChEBI" id="CHEBI:30616"/>
        <dbReference type="ChEBI" id="CHEBI:61977"/>
        <dbReference type="ChEBI" id="CHEBI:456216"/>
        <dbReference type="EC" id="2.7.11.1"/>
    </reaction>
</comment>
<comment type="subunit">
    <text evidence="4 6">Interacts with KCBP (PubMed:10788494, PubMed:25262228). Interacts with PERK8, PERK9, PERK10 and PERK13 (PubMed:25262228).</text>
</comment>
<comment type="interaction">
    <interactant intactId="EBI-1103859">
        <id>Q9LFA2</id>
    </interactant>
    <interactant intactId="EBI-1749651">
        <id>Q9FHN8</id>
        <label>KIN14E</label>
    </interactant>
    <organismsDiffer>false</organismsDiffer>
    <experiments>4</experiments>
</comment>
<comment type="subcellular location">
    <subcellularLocation>
        <location evidence="5">Cytoplasm</location>
    </subcellularLocation>
    <subcellularLocation>
        <location evidence="10">Nucleus</location>
    </subcellularLocation>
    <text>Predominantly in the nucleus.</text>
</comment>
<comment type="tissue specificity">
    <text evidence="4 5">Expressed in roots, cauline leaves, flowers and siliques.</text>
</comment>
<comment type="PTM">
    <text>Autophosphorylated.</text>
</comment>
<comment type="similarity">
    <text evidence="1">Belongs to the protein kinase superfamily. Ser/Thr protein kinase family.</text>
</comment>
<comment type="sequence caution" evidence="9">
    <conflict type="erroneous initiation">
        <sequence resource="EMBL-CDS" id="AAF68383"/>
    </conflict>
    <text>Truncated N-terminus.</text>
</comment>
<keyword id="KW-0067">ATP-binding</keyword>
<keyword id="KW-0963">Cytoplasm</keyword>
<keyword id="KW-0418">Kinase</keyword>
<keyword id="KW-0547">Nucleotide-binding</keyword>
<keyword id="KW-0539">Nucleus</keyword>
<keyword id="KW-1185">Reference proteome</keyword>
<keyword id="KW-0723">Serine/threonine-protein kinase</keyword>
<keyword id="KW-0808">Transferase</keyword>